<sequence length="85" mass="9211">MAHKKAGGSSRNGRDSESKRLGVKRFGDQQVLAGNILVRQRGTPFLAGINVGTGRDHTLYAKAAGKVQFVRRGPKSRTYVDVVTN</sequence>
<protein>
    <recommendedName>
        <fullName evidence="1">Large ribosomal subunit protein bL27</fullName>
    </recommendedName>
    <alternativeName>
        <fullName evidence="3">50S ribosomal protein L27</fullName>
    </alternativeName>
</protein>
<accession>Q3J6S1</accession>
<reference key="1">
    <citation type="journal article" date="2006" name="Appl. Environ. Microbiol.">
        <title>Complete genome sequence of the marine, chemolithoautotrophic, ammonia-oxidizing bacterium Nitrosococcus oceani ATCC 19707.</title>
        <authorList>
            <person name="Klotz M.G."/>
            <person name="Arp D.J."/>
            <person name="Chain P.S.G."/>
            <person name="El-Sheikh A.F."/>
            <person name="Hauser L.J."/>
            <person name="Hommes N.G."/>
            <person name="Larimer F.W."/>
            <person name="Malfatti S.A."/>
            <person name="Norton J.M."/>
            <person name="Poret-Peterson A.T."/>
            <person name="Vergez L.M."/>
            <person name="Ward B.B."/>
        </authorList>
    </citation>
    <scope>NUCLEOTIDE SEQUENCE [LARGE SCALE GENOMIC DNA]</scope>
    <source>
        <strain>ATCC 19707 / BCRC 17464 / JCM 30415 / NCIMB 11848 / C-107</strain>
    </source>
</reference>
<dbReference type="EMBL" id="CP000127">
    <property type="protein sequence ID" value="ABA59475.1"/>
    <property type="molecule type" value="Genomic_DNA"/>
</dbReference>
<dbReference type="RefSeq" id="WP_002813156.1">
    <property type="nucleotide sequence ID" value="NC_007484.1"/>
</dbReference>
<dbReference type="SMR" id="Q3J6S1"/>
<dbReference type="FunCoup" id="Q3J6S1">
    <property type="interactions" value="592"/>
</dbReference>
<dbReference type="STRING" id="323261.Noc_3034"/>
<dbReference type="KEGG" id="noc:Noc_3034"/>
<dbReference type="eggNOG" id="COG0211">
    <property type="taxonomic scope" value="Bacteria"/>
</dbReference>
<dbReference type="HOGENOM" id="CLU_095424_4_1_6"/>
<dbReference type="InParanoid" id="Q3J6S1"/>
<dbReference type="Proteomes" id="UP000006838">
    <property type="component" value="Chromosome"/>
</dbReference>
<dbReference type="GO" id="GO:0022625">
    <property type="term" value="C:cytosolic large ribosomal subunit"/>
    <property type="evidence" value="ECO:0007669"/>
    <property type="project" value="TreeGrafter"/>
</dbReference>
<dbReference type="GO" id="GO:0003735">
    <property type="term" value="F:structural constituent of ribosome"/>
    <property type="evidence" value="ECO:0007669"/>
    <property type="project" value="InterPro"/>
</dbReference>
<dbReference type="GO" id="GO:0006412">
    <property type="term" value="P:translation"/>
    <property type="evidence" value="ECO:0007669"/>
    <property type="project" value="UniProtKB-UniRule"/>
</dbReference>
<dbReference type="FunFam" id="2.40.50.100:FF:000020">
    <property type="entry name" value="50S ribosomal protein L27"/>
    <property type="match status" value="1"/>
</dbReference>
<dbReference type="Gene3D" id="2.40.50.100">
    <property type="match status" value="1"/>
</dbReference>
<dbReference type="HAMAP" id="MF_00539">
    <property type="entry name" value="Ribosomal_bL27"/>
    <property type="match status" value="1"/>
</dbReference>
<dbReference type="InterPro" id="IPR001684">
    <property type="entry name" value="Ribosomal_bL27"/>
</dbReference>
<dbReference type="InterPro" id="IPR018261">
    <property type="entry name" value="Ribosomal_bL27_CS"/>
</dbReference>
<dbReference type="NCBIfam" id="TIGR00062">
    <property type="entry name" value="L27"/>
    <property type="match status" value="1"/>
</dbReference>
<dbReference type="PANTHER" id="PTHR15893:SF0">
    <property type="entry name" value="LARGE RIBOSOMAL SUBUNIT PROTEIN BL27M"/>
    <property type="match status" value="1"/>
</dbReference>
<dbReference type="PANTHER" id="PTHR15893">
    <property type="entry name" value="RIBOSOMAL PROTEIN L27"/>
    <property type="match status" value="1"/>
</dbReference>
<dbReference type="Pfam" id="PF01016">
    <property type="entry name" value="Ribosomal_L27"/>
    <property type="match status" value="1"/>
</dbReference>
<dbReference type="PRINTS" id="PR00063">
    <property type="entry name" value="RIBOSOMALL27"/>
</dbReference>
<dbReference type="SUPFAM" id="SSF110324">
    <property type="entry name" value="Ribosomal L27 protein-like"/>
    <property type="match status" value="1"/>
</dbReference>
<dbReference type="PROSITE" id="PS00831">
    <property type="entry name" value="RIBOSOMAL_L27"/>
    <property type="match status" value="1"/>
</dbReference>
<comment type="similarity">
    <text evidence="1">Belongs to the bacterial ribosomal protein bL27 family.</text>
</comment>
<keyword id="KW-1185">Reference proteome</keyword>
<keyword id="KW-0687">Ribonucleoprotein</keyword>
<keyword id="KW-0689">Ribosomal protein</keyword>
<proteinExistence type="inferred from homology"/>
<evidence type="ECO:0000255" key="1">
    <source>
        <dbReference type="HAMAP-Rule" id="MF_00539"/>
    </source>
</evidence>
<evidence type="ECO:0000256" key="2">
    <source>
        <dbReference type="SAM" id="MobiDB-lite"/>
    </source>
</evidence>
<evidence type="ECO:0000305" key="3"/>
<gene>
    <name evidence="1" type="primary">rpmA</name>
    <name type="ordered locus">Noc_3034</name>
</gene>
<organism>
    <name type="scientific">Nitrosococcus oceani (strain ATCC 19707 / BCRC 17464 / JCM 30415 / NCIMB 11848 / C-107)</name>
    <dbReference type="NCBI Taxonomy" id="323261"/>
    <lineage>
        <taxon>Bacteria</taxon>
        <taxon>Pseudomonadati</taxon>
        <taxon>Pseudomonadota</taxon>
        <taxon>Gammaproteobacteria</taxon>
        <taxon>Chromatiales</taxon>
        <taxon>Chromatiaceae</taxon>
        <taxon>Nitrosococcus</taxon>
    </lineage>
</organism>
<feature type="chain" id="PRO_1000017532" description="Large ribosomal subunit protein bL27">
    <location>
        <begin position="1"/>
        <end position="85"/>
    </location>
</feature>
<feature type="region of interest" description="Disordered" evidence="2">
    <location>
        <begin position="1"/>
        <end position="23"/>
    </location>
</feature>
<name>RL27_NITOC</name>